<organism>
    <name type="scientific">Campylobacter jejuni subsp. jejuni serotype O:2 (strain ATCC 700819 / NCTC 11168)</name>
    <dbReference type="NCBI Taxonomy" id="192222"/>
    <lineage>
        <taxon>Bacteria</taxon>
        <taxon>Pseudomonadati</taxon>
        <taxon>Campylobacterota</taxon>
        <taxon>Epsilonproteobacteria</taxon>
        <taxon>Campylobacterales</taxon>
        <taxon>Campylobacteraceae</taxon>
        <taxon>Campylobacter</taxon>
    </lineage>
</organism>
<comment type="function">
    <text evidence="2">Part of an ABC transporter complex involved in ultra-high affinity tungstate uptake. Specifically binds tungstate.</text>
</comment>
<comment type="subunit">
    <text evidence="4">The complex is composed of two ATP-binding proteins (TupC), two transmembrane proteins (TupB) and a solute-binding protein (TupA).</text>
</comment>
<comment type="subcellular location">
    <subcellularLocation>
        <location evidence="2">Periplasm</location>
    </subcellularLocation>
</comment>
<comment type="disruption phenotype">
    <text evidence="2">Mutants contain the same concentration of molybdenum but they show a 75% reduction in tungsten concentration and a 50% reduction in formate dehydrogenase (FDH) activity.</text>
</comment>
<comment type="miscellaneous">
    <text evidence="2">Binds tungstate 50'000-fold more tightly than molybdate.</text>
</comment>
<keyword id="KW-0574">Periplasm</keyword>
<keyword id="KW-1185">Reference proteome</keyword>
<keyword id="KW-0732">Signal</keyword>
<keyword id="KW-0826">Tungsten</keyword>
<accession>Q0P885</accession>
<dbReference type="EMBL" id="AL111168">
    <property type="protein sequence ID" value="CAL35640.1"/>
    <property type="molecule type" value="Genomic_DNA"/>
</dbReference>
<dbReference type="PIR" id="B81301">
    <property type="entry name" value="B81301"/>
</dbReference>
<dbReference type="RefSeq" id="WP_002851335.1">
    <property type="nucleotide sequence ID" value="NZ_SZUC01000003.1"/>
</dbReference>
<dbReference type="RefSeq" id="YP_002344912.1">
    <property type="nucleotide sequence ID" value="NC_002163.1"/>
</dbReference>
<dbReference type="SMR" id="Q0P885"/>
<dbReference type="IntAct" id="Q0P885">
    <property type="interactions" value="2"/>
</dbReference>
<dbReference type="STRING" id="192222.Cj1540"/>
<dbReference type="TCDB" id="3.A.1.6.11">
    <property type="family name" value="the atp-binding cassette (abc) superfamily"/>
</dbReference>
<dbReference type="PaxDb" id="192222-Cj1540"/>
<dbReference type="DNASU" id="905822"/>
<dbReference type="EnsemblBacteria" id="CAL35640">
    <property type="protein sequence ID" value="CAL35640"/>
    <property type="gene ID" value="Cj1540"/>
</dbReference>
<dbReference type="GeneID" id="905822"/>
<dbReference type="KEGG" id="cje:Cj1540"/>
<dbReference type="PATRIC" id="fig|192222.6.peg.1517"/>
<dbReference type="eggNOG" id="COG2998">
    <property type="taxonomic scope" value="Bacteria"/>
</dbReference>
<dbReference type="HOGENOM" id="CLU_061511_0_0_7"/>
<dbReference type="OrthoDB" id="186379at2"/>
<dbReference type="BRENDA" id="7.3.2.6">
    <property type="organism ID" value="1087"/>
</dbReference>
<dbReference type="Proteomes" id="UP000000799">
    <property type="component" value="Chromosome"/>
</dbReference>
<dbReference type="GO" id="GO:0042597">
    <property type="term" value="C:periplasmic space"/>
    <property type="evidence" value="ECO:0007669"/>
    <property type="project" value="UniProtKB-SubCell"/>
</dbReference>
<dbReference type="GO" id="GO:1901238">
    <property type="term" value="F:ABC-type tungstate transporter activity"/>
    <property type="evidence" value="ECO:0007669"/>
    <property type="project" value="InterPro"/>
</dbReference>
<dbReference type="Gene3D" id="3.40.190.10">
    <property type="entry name" value="Periplasmic binding protein-like II"/>
    <property type="match status" value="2"/>
</dbReference>
<dbReference type="InterPro" id="IPR052738">
    <property type="entry name" value="ABC-Tungstate_binding"/>
</dbReference>
<dbReference type="InterPro" id="IPR024370">
    <property type="entry name" value="PBP_domain"/>
</dbReference>
<dbReference type="InterPro" id="IPR053775">
    <property type="entry name" value="TupA"/>
</dbReference>
<dbReference type="NCBIfam" id="NF041772">
    <property type="entry name" value="tung_bind_TupA"/>
    <property type="match status" value="1"/>
</dbReference>
<dbReference type="PANTHER" id="PTHR37945">
    <property type="entry name" value="EXTRACELLULAR TUNGSTATE BINDING PROTEIN"/>
    <property type="match status" value="1"/>
</dbReference>
<dbReference type="PANTHER" id="PTHR37945:SF1">
    <property type="entry name" value="EXTRACELLULAR TUNGSTATE BINDING PROTEIN"/>
    <property type="match status" value="1"/>
</dbReference>
<dbReference type="Pfam" id="PF12849">
    <property type="entry name" value="PBP_like_2"/>
    <property type="match status" value="1"/>
</dbReference>
<dbReference type="SUPFAM" id="SSF53850">
    <property type="entry name" value="Periplasmic binding protein-like II"/>
    <property type="match status" value="1"/>
</dbReference>
<gene>
    <name evidence="3" type="primary">tupA</name>
    <name evidence="5" type="ordered locus">Cj1540</name>
</gene>
<name>TUPA_CAMJE</name>
<reference key="1">
    <citation type="journal article" date="2000" name="Nature">
        <title>The genome sequence of the food-borne pathogen Campylobacter jejuni reveals hypervariable sequences.</title>
        <authorList>
            <person name="Parkhill J."/>
            <person name="Wren B.W."/>
            <person name="Mungall K.L."/>
            <person name="Ketley J.M."/>
            <person name="Churcher C.M."/>
            <person name="Basham D."/>
            <person name="Chillingworth T."/>
            <person name="Davies R.M."/>
            <person name="Feltwell T."/>
            <person name="Holroyd S."/>
            <person name="Jagels K."/>
            <person name="Karlyshev A.V."/>
            <person name="Moule S."/>
            <person name="Pallen M.J."/>
            <person name="Penn C.W."/>
            <person name="Quail M.A."/>
            <person name="Rajandream M.A."/>
            <person name="Rutherford K.M."/>
            <person name="van Vliet A.H.M."/>
            <person name="Whitehead S."/>
            <person name="Barrell B.G."/>
        </authorList>
    </citation>
    <scope>NUCLEOTIDE SEQUENCE [LARGE SCALE GENOMIC DNA]</scope>
    <source>
        <strain>ATCC 700819 / NCTC 11168</strain>
    </source>
</reference>
<reference key="2">
    <citation type="journal article" date="2009" name="Mol. Microbiol.">
        <title>A role for tungsten in the biology of Campylobacter jejuni: tungstate stimulates formate dehydrogenase activity and is transported via an ultra-high affinity ABC system distinct from the molybdate transporter.</title>
        <authorList>
            <person name="Smart J.P."/>
            <person name="Cliff M.J."/>
            <person name="Kelly D.J."/>
        </authorList>
    </citation>
    <scope>FUNCTION</scope>
    <scope>SUBCELLULAR LOCATION</scope>
    <scope>DISRUPTION PHENOTYPE</scope>
    <source>
        <strain>ATCC 700819 / NCTC 11168</strain>
    </source>
</reference>
<proteinExistence type="inferred from homology"/>
<evidence type="ECO:0000255" key="1"/>
<evidence type="ECO:0000269" key="2">
    <source>
    </source>
</evidence>
<evidence type="ECO:0000303" key="3">
    <source>
    </source>
</evidence>
<evidence type="ECO:0000305" key="4"/>
<evidence type="ECO:0000312" key="5">
    <source>
        <dbReference type="EMBL" id="CAL35640.1"/>
    </source>
</evidence>
<sequence length="269" mass="29801">MKKIISLALALALSASAAELKMATTTSTDNTGLLDALKPLYEKESGNTLKWVAVGTGAALKMGEDCNADVLFVHSPKAEKEFMKKGFGVDRTPVMYNDFIIIADKSLASKFKGKNLKESLELIKNEKLTFISRGDKSGTDNKEKSLWKNLGGVPEKQSWYQQSGQGMLASIKIAEEKKGVILTDRGTYIKYEANEKGKPNLVIVNEGDDSLKNFYSVIATNPKHCKNVNYTEASKFIKWVTSDKTLNFIADFKLLNKPLFVIDAKTRKD</sequence>
<protein>
    <recommendedName>
        <fullName evidence="4">Tungstate-binding protein TupA</fullName>
    </recommendedName>
</protein>
<feature type="signal peptide" evidence="1">
    <location>
        <begin position="1"/>
        <end position="17"/>
    </location>
</feature>
<feature type="chain" id="PRO_5004175394" description="Tungstate-binding protein TupA">
    <location>
        <begin position="18"/>
        <end position="269"/>
    </location>
</feature>